<sequence length="477" mass="53476">MTDTKQLFIEAGQSQLFHNWESLSRKDQEELLSNLEQISSKRSPAKLLEDCQNAIKFSLANSSKDTGVEISPLPPTSYESLIGNSKKENEYWRLGLEAIGKGEVAVILMAGGQGTRLGSSQPKGCYDIGLPSKKSLFQIQAEKLIRLQDMVKDKKVEIPWYIMTSGPTRAATEAYFQEHNYFGLNKEQITFFNQGTLPAFDLTGKHFLMKDPVNLSQSPDGNGGLYRAIKENKLNEDFDRRGIKHVYMYCVDNVLSKIADPVFIGFAIKHGFELATKAVRKRDAHESVGLIATKNEKPCVIEYSEISNELAEAKDKDGLLKLRAGNIVNHYYLVDLLKRDLDQWCENMPYHIAKKKIPAYDSVTGKYTKPTEPNGIKLEQFIFDVFDTVPLNKFGCLEVDRCKEFSPLKNGPGSKNDNPETSRLAYLKLGTSWLEDAGAIVKDGVLVEVSSKLSYAGENLSQFKGKVFDRSGIVLEK</sequence>
<protein>
    <recommendedName>
        <fullName evidence="5">UDP-N-acetylglucosamine pyrophosphorylase</fullName>
        <ecNumber evidence="4">2.7.7.23</ecNumber>
    </recommendedName>
</protein>
<name>UAP1_YEAST</name>
<accession>P43123</accession>
<accession>D6VRP7</accession>
<gene>
    <name type="primary">QRI1</name>
    <name evidence="5" type="synonym">UAP1</name>
    <name type="ordered locus">YDL103C</name>
    <name type="ORF">D2362</name>
</gene>
<comment type="function">
    <text evidence="4">UDP-N-acetylglucosamine pyrophosphorylase that utilizes N-acetylglucosamine-1-phosphate as substrate (PubMed:9603950). Together with AGM1, is involved in the production of UDP-N-acetylglucosamine from N-acetylglucosamine-6-phosphate (PubMed:9603950).</text>
</comment>
<comment type="catalytic activity">
    <reaction evidence="4">
        <text>N-acetyl-alpha-D-glucosamine 1-phosphate + UTP + H(+) = UDP-N-acetyl-alpha-D-glucosamine + diphosphate</text>
        <dbReference type="Rhea" id="RHEA:13509"/>
        <dbReference type="ChEBI" id="CHEBI:15378"/>
        <dbReference type="ChEBI" id="CHEBI:33019"/>
        <dbReference type="ChEBI" id="CHEBI:46398"/>
        <dbReference type="ChEBI" id="CHEBI:57705"/>
        <dbReference type="ChEBI" id="CHEBI:57776"/>
        <dbReference type="EC" id="2.7.7.23"/>
    </reaction>
</comment>
<comment type="biophysicochemical properties">
    <kinetics>
        <KM evidence="4">13.51 uM for N-acetyl-alpha-D-glucosamine 1-phosphate</KM>
        <KM evidence="4">20.58 uM for UTP</KM>
    </kinetics>
</comment>
<comment type="pathway">
    <text evidence="4">Nucleotide-sugar biosynthesis; UDP-N-acetyl-alpha-D-glucosamine biosynthesis; UDP-N-acetyl-alpha-D-glucosamine from N-acetyl-alpha-D-glucosamine 1-phosphate: step 1/1.</text>
</comment>
<comment type="subcellular location">
    <subcellularLocation>
        <location evidence="6">Cytoplasm</location>
    </subcellularLocation>
</comment>
<comment type="miscellaneous">
    <text evidence="3">Present with 5480 molecules/cell in log phase SD medium.</text>
</comment>
<comment type="similarity">
    <text evidence="6">Belongs to the UDPGP type 1 family.</text>
</comment>
<proteinExistence type="evidence at protein level"/>
<organism>
    <name type="scientific">Saccharomyces cerevisiae (strain ATCC 204508 / S288c)</name>
    <name type="common">Baker's yeast</name>
    <dbReference type="NCBI Taxonomy" id="559292"/>
    <lineage>
        <taxon>Eukaryota</taxon>
        <taxon>Fungi</taxon>
        <taxon>Dikarya</taxon>
        <taxon>Ascomycota</taxon>
        <taxon>Saccharomycotina</taxon>
        <taxon>Saccharomycetes</taxon>
        <taxon>Saccharomycetales</taxon>
        <taxon>Saccharomycetaceae</taxon>
        <taxon>Saccharomyces</taxon>
    </lineage>
</organism>
<dbReference type="EC" id="2.7.7.23" evidence="4"/>
<dbReference type="EMBL" id="AB011272">
    <property type="protein sequence ID" value="BAA31203.1"/>
    <property type="molecule type" value="Genomic_DNA"/>
</dbReference>
<dbReference type="EMBL" id="X79380">
    <property type="protein sequence ID" value="CAA55927.1"/>
    <property type="molecule type" value="Genomic_DNA"/>
</dbReference>
<dbReference type="EMBL" id="X95644">
    <property type="protein sequence ID" value="CAA64910.1"/>
    <property type="molecule type" value="Genomic_DNA"/>
</dbReference>
<dbReference type="EMBL" id="Z74151">
    <property type="protein sequence ID" value="CAA98670.1"/>
    <property type="molecule type" value="Genomic_DNA"/>
</dbReference>
<dbReference type="EMBL" id="BK006938">
    <property type="protein sequence ID" value="DAA11757.1"/>
    <property type="molecule type" value="Genomic_DNA"/>
</dbReference>
<dbReference type="PIR" id="S50738">
    <property type="entry name" value="S50738"/>
</dbReference>
<dbReference type="RefSeq" id="NP_010180.1">
    <property type="nucleotide sequence ID" value="NM_001180162.1"/>
</dbReference>
<dbReference type="SMR" id="P43123"/>
<dbReference type="BioGRID" id="31959">
    <property type="interactions" value="428"/>
</dbReference>
<dbReference type="DIP" id="DIP-2837N"/>
<dbReference type="FunCoup" id="P43123">
    <property type="interactions" value="654"/>
</dbReference>
<dbReference type="IntAct" id="P43123">
    <property type="interactions" value="1"/>
</dbReference>
<dbReference type="MINT" id="P43123"/>
<dbReference type="STRING" id="4932.YDL103C"/>
<dbReference type="iPTMnet" id="P43123"/>
<dbReference type="PaxDb" id="4932-YDL103C"/>
<dbReference type="PeptideAtlas" id="P43123"/>
<dbReference type="EnsemblFungi" id="YDL103C_mRNA">
    <property type="protein sequence ID" value="YDL103C"/>
    <property type="gene ID" value="YDL103C"/>
</dbReference>
<dbReference type="GeneID" id="851455"/>
<dbReference type="KEGG" id="sce:YDL103C"/>
<dbReference type="AGR" id="SGD:S000002261"/>
<dbReference type="SGD" id="S000002261">
    <property type="gene designation" value="QRI1"/>
</dbReference>
<dbReference type="VEuPathDB" id="FungiDB:YDL103C"/>
<dbReference type="eggNOG" id="KOG2388">
    <property type="taxonomic scope" value="Eukaryota"/>
</dbReference>
<dbReference type="GeneTree" id="ENSGT00940000153464"/>
<dbReference type="HOGENOM" id="CLU_025603_1_1_1"/>
<dbReference type="InParanoid" id="P43123"/>
<dbReference type="OMA" id="YFQVDNP"/>
<dbReference type="OrthoDB" id="532420at2759"/>
<dbReference type="BioCyc" id="MetaCyc:YDL103C-MONOMER"/>
<dbReference type="BioCyc" id="YEAST:YDL103C-MONOMER"/>
<dbReference type="BRENDA" id="2.7.7.23">
    <property type="organism ID" value="984"/>
</dbReference>
<dbReference type="Reactome" id="R-SCE-446210">
    <property type="pathway name" value="Synthesis of UDP-N-acetyl-glucosamine"/>
</dbReference>
<dbReference type="SABIO-RK" id="P43123"/>
<dbReference type="UniPathway" id="UPA00113">
    <property type="reaction ID" value="UER00533"/>
</dbReference>
<dbReference type="BioGRID-ORCS" id="851455">
    <property type="hits" value="7 hits in 10 CRISPR screens"/>
</dbReference>
<dbReference type="PRO" id="PR:P43123"/>
<dbReference type="Proteomes" id="UP000002311">
    <property type="component" value="Chromosome IV"/>
</dbReference>
<dbReference type="RNAct" id="P43123">
    <property type="molecule type" value="protein"/>
</dbReference>
<dbReference type="GO" id="GO:0005737">
    <property type="term" value="C:cytoplasm"/>
    <property type="evidence" value="ECO:0007005"/>
    <property type="project" value="SGD"/>
</dbReference>
<dbReference type="GO" id="GO:0005634">
    <property type="term" value="C:nucleus"/>
    <property type="evidence" value="ECO:0007005"/>
    <property type="project" value="SGD"/>
</dbReference>
<dbReference type="GO" id="GO:0003977">
    <property type="term" value="F:UDP-N-acetylglucosamine diphosphorylase activity"/>
    <property type="evidence" value="ECO:0000314"/>
    <property type="project" value="SGD"/>
</dbReference>
<dbReference type="GO" id="GO:0006048">
    <property type="term" value="P:UDP-N-acetylglucosamine biosynthetic process"/>
    <property type="evidence" value="ECO:0000314"/>
    <property type="project" value="SGD"/>
</dbReference>
<dbReference type="CDD" id="cd04193">
    <property type="entry name" value="UDPGlcNAc_PPase"/>
    <property type="match status" value="1"/>
</dbReference>
<dbReference type="FunFam" id="3.90.550.10:FF:000075">
    <property type="entry name" value="Probable UDP-N-acetylglucosamine pyrophosphorylase"/>
    <property type="match status" value="1"/>
</dbReference>
<dbReference type="Gene3D" id="3.90.550.10">
    <property type="entry name" value="Spore Coat Polysaccharide Biosynthesis Protein SpsA, Chain A"/>
    <property type="match status" value="1"/>
</dbReference>
<dbReference type="InterPro" id="IPR029044">
    <property type="entry name" value="Nucleotide-diphossugar_trans"/>
</dbReference>
<dbReference type="InterPro" id="IPR039741">
    <property type="entry name" value="UDP-sugar_pyrophosphorylase"/>
</dbReference>
<dbReference type="InterPro" id="IPR002618">
    <property type="entry name" value="UDPGP_fam"/>
</dbReference>
<dbReference type="PANTHER" id="PTHR11952:SF2">
    <property type="entry name" value="LD24639P"/>
    <property type="match status" value="1"/>
</dbReference>
<dbReference type="PANTHER" id="PTHR11952">
    <property type="entry name" value="UDP- GLUCOSE PYROPHOSPHORYLASE"/>
    <property type="match status" value="1"/>
</dbReference>
<dbReference type="Pfam" id="PF01704">
    <property type="entry name" value="UDPGP"/>
    <property type="match status" value="1"/>
</dbReference>
<dbReference type="SUPFAM" id="SSF53448">
    <property type="entry name" value="Nucleotide-diphospho-sugar transferases"/>
    <property type="match status" value="1"/>
</dbReference>
<evidence type="ECO:0000250" key="1">
    <source>
        <dbReference type="UniProtKB" id="Q16222"/>
    </source>
</evidence>
<evidence type="ECO:0000250" key="2">
    <source>
        <dbReference type="UniProtKB" id="Q9M9P3"/>
    </source>
</evidence>
<evidence type="ECO:0000269" key="3">
    <source>
    </source>
</evidence>
<evidence type="ECO:0000269" key="4">
    <source>
    </source>
</evidence>
<evidence type="ECO:0000303" key="5">
    <source>
    </source>
</evidence>
<evidence type="ECO:0000305" key="6"/>
<evidence type="ECO:0007744" key="7">
    <source>
    </source>
</evidence>
<evidence type="ECO:0007744" key="8">
    <source>
    </source>
</evidence>
<reference key="1">
    <citation type="journal article" date="1998" name="J. Biol. Chem.">
        <title>The eukaryotic UDP-N-acetylglucosamine pyrophosphorylases: gene cloning, protein expression, and catalytic mechanism.</title>
        <authorList>
            <person name="Mio T."/>
            <person name="Yabe T."/>
            <person name="Arisawa M."/>
            <person name="Yamada-Okabe H."/>
        </authorList>
    </citation>
    <scope>NUCLEOTIDE SEQUENCE [GENOMIC DNA]</scope>
    <scope>FUNCTION</scope>
    <scope>CATALYTIC ACTIVITY</scope>
    <scope>BIOPHYSICOCHEMICAL PROPERTIES</scope>
    <scope>MUTAGENESIS OF GLY-111; GLY-112; GLY-114; THR-115; ARG-116; LEU-117; PRO-122 AND LYS-123</scope>
    <scope>PATHWAY</scope>
    <source>
        <strain>ATCC 200589 / A451</strain>
    </source>
</reference>
<reference key="2">
    <citation type="journal article" date="1994" name="Yeast">
        <title>Sequence of the PHO2-POL3 (CDC2) region of chromosome IV of Saccharomyces cerevisiae.</title>
        <authorList>
            <person name="Simon M."/>
            <person name="Benit P."/>
            <person name="Vassal A."/>
            <person name="Dubois C."/>
            <person name="Faye G."/>
        </authorList>
    </citation>
    <scope>NUCLEOTIDE SEQUENCE [GENOMIC DNA]</scope>
</reference>
<reference key="3">
    <citation type="journal article" date="1996" name="Yeast">
        <title>The sequence of a 20.3 kb DNA fragment from the left arm of Saccharomyces cerevisiae chromosome IV contains the KIN28, MSS2, PHO2, POL3 and DUN1 genes, and six new open reading frames.</title>
        <authorList>
            <person name="Saiz J.E."/>
            <person name="Buitrago M.J."/>
            <person name="Garcia R."/>
            <person name="Revuelta J.L."/>
            <person name="del Rey F."/>
        </authorList>
    </citation>
    <scope>NUCLEOTIDE SEQUENCE [GENOMIC DNA]</scope>
    <source>
        <strain>ATCC 96604 / S288c / FY1679</strain>
    </source>
</reference>
<reference key="4">
    <citation type="journal article" date="1997" name="Nature">
        <title>The nucleotide sequence of Saccharomyces cerevisiae chromosome IV.</title>
        <authorList>
            <person name="Jacq C."/>
            <person name="Alt-Moerbe J."/>
            <person name="Andre B."/>
            <person name="Arnold W."/>
            <person name="Bahr A."/>
            <person name="Ballesta J.P.G."/>
            <person name="Bargues M."/>
            <person name="Baron L."/>
            <person name="Becker A."/>
            <person name="Biteau N."/>
            <person name="Bloecker H."/>
            <person name="Blugeon C."/>
            <person name="Boskovic J."/>
            <person name="Brandt P."/>
            <person name="Brueckner M."/>
            <person name="Buitrago M.J."/>
            <person name="Coster F."/>
            <person name="Delaveau T."/>
            <person name="del Rey F."/>
            <person name="Dujon B."/>
            <person name="Eide L.G."/>
            <person name="Garcia-Cantalejo J.M."/>
            <person name="Goffeau A."/>
            <person name="Gomez-Peris A."/>
            <person name="Granotier C."/>
            <person name="Hanemann V."/>
            <person name="Hankeln T."/>
            <person name="Hoheisel J.D."/>
            <person name="Jaeger W."/>
            <person name="Jimenez A."/>
            <person name="Jonniaux J.-L."/>
            <person name="Kraemer C."/>
            <person name="Kuester H."/>
            <person name="Laamanen P."/>
            <person name="Legros Y."/>
            <person name="Louis E.J."/>
            <person name="Moeller-Rieker S."/>
            <person name="Monnet A."/>
            <person name="Moro M."/>
            <person name="Mueller-Auer S."/>
            <person name="Nussbaumer B."/>
            <person name="Paricio N."/>
            <person name="Paulin L."/>
            <person name="Perea J."/>
            <person name="Perez-Alonso M."/>
            <person name="Perez-Ortin J.E."/>
            <person name="Pohl T.M."/>
            <person name="Prydz H."/>
            <person name="Purnelle B."/>
            <person name="Rasmussen S.W."/>
            <person name="Remacha M.A."/>
            <person name="Revuelta J.L."/>
            <person name="Rieger M."/>
            <person name="Salom D."/>
            <person name="Saluz H.P."/>
            <person name="Saiz J.E."/>
            <person name="Saren A.-M."/>
            <person name="Schaefer M."/>
            <person name="Scharfe M."/>
            <person name="Schmidt E.R."/>
            <person name="Schneider C."/>
            <person name="Scholler P."/>
            <person name="Schwarz S."/>
            <person name="Soler-Mira A."/>
            <person name="Urrestarazu L.A."/>
            <person name="Verhasselt P."/>
            <person name="Vissers S."/>
            <person name="Voet M."/>
            <person name="Volckaert G."/>
            <person name="Wagner G."/>
            <person name="Wambutt R."/>
            <person name="Wedler E."/>
            <person name="Wedler H."/>
            <person name="Woelfl S."/>
            <person name="Harris D.E."/>
            <person name="Bowman S."/>
            <person name="Brown D."/>
            <person name="Churcher C.M."/>
            <person name="Connor R."/>
            <person name="Dedman K."/>
            <person name="Gentles S."/>
            <person name="Hamlin N."/>
            <person name="Hunt S."/>
            <person name="Jones L."/>
            <person name="McDonald S."/>
            <person name="Murphy L.D."/>
            <person name="Niblett D."/>
            <person name="Odell C."/>
            <person name="Oliver K."/>
            <person name="Rajandream M.A."/>
            <person name="Richards C."/>
            <person name="Shore L."/>
            <person name="Walsh S.V."/>
            <person name="Barrell B.G."/>
            <person name="Dietrich F.S."/>
            <person name="Mulligan J.T."/>
            <person name="Allen E."/>
            <person name="Araujo R."/>
            <person name="Aviles E."/>
            <person name="Berno A."/>
            <person name="Carpenter J."/>
            <person name="Chen E."/>
            <person name="Cherry J.M."/>
            <person name="Chung E."/>
            <person name="Duncan M."/>
            <person name="Hunicke-Smith S."/>
            <person name="Hyman R.W."/>
            <person name="Komp C."/>
            <person name="Lashkari D."/>
            <person name="Lew H."/>
            <person name="Lin D."/>
            <person name="Mosedale D."/>
            <person name="Nakahara K."/>
            <person name="Namath A."/>
            <person name="Oefner P."/>
            <person name="Oh C."/>
            <person name="Petel F.X."/>
            <person name="Roberts D."/>
            <person name="Schramm S."/>
            <person name="Schroeder M."/>
            <person name="Shogren T."/>
            <person name="Shroff N."/>
            <person name="Winant A."/>
            <person name="Yelton M.A."/>
            <person name="Botstein D."/>
            <person name="Davis R.W."/>
            <person name="Johnston M."/>
            <person name="Andrews S."/>
            <person name="Brinkman R."/>
            <person name="Cooper J."/>
            <person name="Ding H."/>
            <person name="Du Z."/>
            <person name="Favello A."/>
            <person name="Fulton L."/>
            <person name="Gattung S."/>
            <person name="Greco T."/>
            <person name="Hallsworth K."/>
            <person name="Hawkins J."/>
            <person name="Hillier L.W."/>
            <person name="Jier M."/>
            <person name="Johnson D."/>
            <person name="Johnston L."/>
            <person name="Kirsten J."/>
            <person name="Kucaba T."/>
            <person name="Langston Y."/>
            <person name="Latreille P."/>
            <person name="Le T."/>
            <person name="Mardis E."/>
            <person name="Menezes S."/>
            <person name="Miller N."/>
            <person name="Nhan M."/>
            <person name="Pauley A."/>
            <person name="Peluso D."/>
            <person name="Rifkin L."/>
            <person name="Riles L."/>
            <person name="Taich A."/>
            <person name="Trevaskis E."/>
            <person name="Vignati D."/>
            <person name="Wilcox L."/>
            <person name="Wohldman P."/>
            <person name="Vaudin M."/>
            <person name="Wilson R."/>
            <person name="Waterston R."/>
            <person name="Albermann K."/>
            <person name="Hani J."/>
            <person name="Heumann K."/>
            <person name="Kleine K."/>
            <person name="Mewes H.-W."/>
            <person name="Zollner A."/>
            <person name="Zaccaria P."/>
        </authorList>
    </citation>
    <scope>NUCLEOTIDE SEQUENCE [LARGE SCALE GENOMIC DNA]</scope>
    <source>
        <strain>ATCC 204508 / S288c</strain>
    </source>
</reference>
<reference key="5">
    <citation type="journal article" date="2014" name="G3 (Bethesda)">
        <title>The reference genome sequence of Saccharomyces cerevisiae: Then and now.</title>
        <authorList>
            <person name="Engel S.R."/>
            <person name="Dietrich F.S."/>
            <person name="Fisk D.G."/>
            <person name="Binkley G."/>
            <person name="Balakrishnan R."/>
            <person name="Costanzo M.C."/>
            <person name="Dwight S.S."/>
            <person name="Hitz B.C."/>
            <person name="Karra K."/>
            <person name="Nash R.S."/>
            <person name="Weng S."/>
            <person name="Wong E.D."/>
            <person name="Lloyd P."/>
            <person name="Skrzypek M.S."/>
            <person name="Miyasato S.R."/>
            <person name="Simison M."/>
            <person name="Cherry J.M."/>
        </authorList>
    </citation>
    <scope>GENOME REANNOTATION</scope>
    <source>
        <strain>ATCC 204508 / S288c</strain>
    </source>
</reference>
<reference key="6">
    <citation type="journal article" date="2003" name="Nature">
        <title>Global analysis of protein expression in yeast.</title>
        <authorList>
            <person name="Ghaemmaghami S."/>
            <person name="Huh W.-K."/>
            <person name="Bower K."/>
            <person name="Howson R.W."/>
            <person name="Belle A."/>
            <person name="Dephoure N."/>
            <person name="O'Shea E.K."/>
            <person name="Weissman J.S."/>
        </authorList>
    </citation>
    <scope>LEVEL OF PROTEIN EXPRESSION [LARGE SCALE ANALYSIS]</scope>
</reference>
<reference key="7">
    <citation type="journal article" date="2008" name="Mol. Cell. Proteomics">
        <title>A multidimensional chromatography technology for in-depth phosphoproteome analysis.</title>
        <authorList>
            <person name="Albuquerque C.P."/>
            <person name="Smolka M.B."/>
            <person name="Payne S.H."/>
            <person name="Bafna V."/>
            <person name="Eng J."/>
            <person name="Zhou H."/>
        </authorList>
    </citation>
    <scope>PHOSPHORYLATION [LARGE SCALE ANALYSIS] AT SER-461</scope>
    <scope>IDENTIFICATION BY MASS SPECTROMETRY [LARGE SCALE ANALYSIS]</scope>
</reference>
<reference key="8">
    <citation type="journal article" date="2009" name="Science">
        <title>Global analysis of Cdk1 substrate phosphorylation sites provides insights into evolution.</title>
        <authorList>
            <person name="Holt L.J."/>
            <person name="Tuch B.B."/>
            <person name="Villen J."/>
            <person name="Johnson A.D."/>
            <person name="Gygi S.P."/>
            <person name="Morgan D.O."/>
        </authorList>
    </citation>
    <scope>PHOSPHORYLATION [LARGE SCALE ANALYSIS] AT SER-218</scope>
    <scope>IDENTIFICATION BY MASS SPECTROMETRY [LARGE SCALE ANALYSIS]</scope>
</reference>
<keyword id="KW-0963">Cytoplasm</keyword>
<keyword id="KW-0548">Nucleotidyltransferase</keyword>
<keyword id="KW-0597">Phosphoprotein</keyword>
<keyword id="KW-1185">Reference proteome</keyword>
<keyword id="KW-0808">Transferase</keyword>
<feature type="chain" id="PRO_0000185773" description="UDP-N-acetylglucosamine pyrophosphorylase">
    <location>
        <begin position="1"/>
        <end position="477"/>
    </location>
</feature>
<feature type="short sequence motif" description="Substrate binding" evidence="1">
    <location>
        <begin position="109"/>
        <end position="112"/>
    </location>
</feature>
<feature type="short sequence motif" description="Substrate binding" evidence="1">
    <location>
        <begin position="302"/>
        <end position="303"/>
    </location>
</feature>
<feature type="binding site" evidence="2">
    <location>
        <begin position="109"/>
        <end position="112"/>
    </location>
    <ligand>
        <name>UTP</name>
        <dbReference type="ChEBI" id="CHEBI:46398"/>
    </ligand>
</feature>
<feature type="binding site" evidence="2">
    <location>
        <position position="123"/>
    </location>
    <ligand>
        <name>UTP</name>
        <dbReference type="ChEBI" id="CHEBI:46398"/>
    </ligand>
</feature>
<feature type="binding site" evidence="2">
    <location>
        <position position="194"/>
    </location>
    <ligand>
        <name>UTP</name>
        <dbReference type="ChEBI" id="CHEBI:46398"/>
    </ligand>
</feature>
<feature type="binding site" evidence="2">
    <location>
        <position position="221"/>
    </location>
    <ligand>
        <name>UTP</name>
        <dbReference type="ChEBI" id="CHEBI:46398"/>
    </ligand>
</feature>
<feature type="binding site" evidence="1">
    <location>
        <position position="222"/>
    </location>
    <ligand>
        <name>substrate</name>
    </ligand>
</feature>
<feature type="binding site" evidence="2">
    <location>
        <position position="252"/>
    </location>
    <ligand>
        <name>UTP</name>
        <dbReference type="ChEBI" id="CHEBI:46398"/>
    </ligand>
</feature>
<feature type="binding site" evidence="2">
    <location>
        <position position="377"/>
    </location>
    <ligand>
        <name>UTP</name>
        <dbReference type="ChEBI" id="CHEBI:46398"/>
    </ligand>
</feature>
<feature type="binding site" evidence="1">
    <location>
        <position position="409"/>
    </location>
    <ligand>
        <name>substrate</name>
    </ligand>
</feature>
<feature type="modified residue" description="Phosphoserine" evidence="8">
    <location>
        <position position="218"/>
    </location>
</feature>
<feature type="modified residue" description="Phosphoserine" evidence="7">
    <location>
        <position position="461"/>
    </location>
</feature>
<feature type="mutagenesis site" description="Decrease of activity." evidence="4">
    <original>G</original>
    <variation>A</variation>
    <location>
        <position position="111"/>
    </location>
</feature>
<feature type="mutagenesis site" description="Loss of activity." evidence="4">
    <original>G</original>
    <variation>A</variation>
    <location>
        <position position="112"/>
    </location>
</feature>
<feature type="mutagenesis site" description="Decrease of activity." evidence="4">
    <original>G</original>
    <variation>A</variation>
    <location>
        <position position="114"/>
    </location>
</feature>
<feature type="mutagenesis site" description="Decrease of activity." evidence="4">
    <original>T</original>
    <variation>A</variation>
    <location>
        <position position="115"/>
    </location>
</feature>
<feature type="mutagenesis site" description="Loss of activity." evidence="4">
    <original>R</original>
    <variation>A</variation>
    <location>
        <position position="116"/>
    </location>
</feature>
<feature type="mutagenesis site" description="Decrease of activity." evidence="4">
    <original>L</original>
    <variation>A</variation>
    <location>
        <position position="117"/>
    </location>
</feature>
<feature type="mutagenesis site" description="Decrease of activity." evidence="4">
    <original>P</original>
    <variation>A</variation>
    <location>
        <position position="122"/>
    </location>
</feature>
<feature type="mutagenesis site" description="Loss of activity." evidence="4">
    <original>K</original>
    <variation>A</variation>
    <location>
        <position position="123"/>
    </location>
</feature>